<protein>
    <recommendedName>
        <fullName>ATP-dependent RNA helicase DBP2</fullName>
        <ecNumber>3.6.4.13</ecNumber>
    </recommendedName>
</protein>
<gene>
    <name type="primary">DBP2</name>
    <name type="ORF">FGRRES_16145</name>
    <name type="ORF">FGSG_12302</name>
</gene>
<evidence type="ECO:0000250" key="1"/>
<evidence type="ECO:0000255" key="2">
    <source>
        <dbReference type="PROSITE-ProRule" id="PRU00541"/>
    </source>
</evidence>
<evidence type="ECO:0000255" key="3">
    <source>
        <dbReference type="PROSITE-ProRule" id="PRU00542"/>
    </source>
</evidence>
<evidence type="ECO:0000256" key="4">
    <source>
        <dbReference type="SAM" id="MobiDB-lite"/>
    </source>
</evidence>
<evidence type="ECO:0000305" key="5"/>
<sequence>MSGYDGGYSGGGGRGGGGYGGGGYGRDRGGDRGGDRNGGGFGGRSNGNGYGGGGYGGGGGGYGGGGFGGGAGGDRMGALGSGLKNQEWDINSLPKFEKSFYKEHPDVETRSDADVEAFRRKHQMTIAGSNVPKPVETFDEAGFPRYVMDEVKAQGFPAPTAIQSQGWPMALSGRDVVGIAETGSGKTLTYCLPSIVHINAQPLLAPGDGPIVLVLAPTRELAVQIQEEMKKFGRSSRIRNTCVYGGVPKGPQIRDLSRGVEVCIATPGRLIDMLEAGKTNLRRVTYLVLDEADRMLDMGFEPQIRKIIGQIRPDRQTLMWSATWPKEVRALASDFLQDFIQVNIGSMELAANHRITQIVEVVTEMEKRDRMIKHMEKVMENKENKILIFVGTKRVADEITRFLRQDGWPALSIHGDKQQNERDWVLDQFKTGKSPIMVATDVASRGIDVRNITHVLNYDYPNNSEDYIHRIGRTGRAGAMGTAITLFTTDNQKQARDLVNVLQEAKQQIDPRLVEMTRYGGGGGRGYGGWGRGRGGGRANAHNANNMPIGNRRW</sequence>
<accession>Q4IF76</accession>
<accession>A0A0E0S6F9</accession>
<accession>I1S631</accession>
<reference key="1">
    <citation type="journal article" date="2007" name="Science">
        <title>The Fusarium graminearum genome reveals a link between localized polymorphism and pathogen specialization.</title>
        <authorList>
            <person name="Cuomo C.A."/>
            <person name="Gueldener U."/>
            <person name="Xu J.-R."/>
            <person name="Trail F."/>
            <person name="Turgeon B.G."/>
            <person name="Di Pietro A."/>
            <person name="Walton J.D."/>
            <person name="Ma L.-J."/>
            <person name="Baker S.E."/>
            <person name="Rep M."/>
            <person name="Adam G."/>
            <person name="Antoniw J."/>
            <person name="Baldwin T."/>
            <person name="Calvo S.E."/>
            <person name="Chang Y.-L."/>
            <person name="DeCaprio D."/>
            <person name="Gale L.R."/>
            <person name="Gnerre S."/>
            <person name="Goswami R.S."/>
            <person name="Hammond-Kosack K."/>
            <person name="Harris L.J."/>
            <person name="Hilburn K."/>
            <person name="Kennell J.C."/>
            <person name="Kroken S."/>
            <person name="Magnuson J.K."/>
            <person name="Mannhaupt G."/>
            <person name="Mauceli E.W."/>
            <person name="Mewes H.-W."/>
            <person name="Mitterbauer R."/>
            <person name="Muehlbauer G."/>
            <person name="Muensterkoetter M."/>
            <person name="Nelson D."/>
            <person name="O'Donnell K."/>
            <person name="Ouellet T."/>
            <person name="Qi W."/>
            <person name="Quesneville H."/>
            <person name="Roncero M.I.G."/>
            <person name="Seong K.-Y."/>
            <person name="Tetko I.V."/>
            <person name="Urban M."/>
            <person name="Waalwijk C."/>
            <person name="Ward T.J."/>
            <person name="Yao J."/>
            <person name="Birren B.W."/>
            <person name="Kistler H.C."/>
        </authorList>
    </citation>
    <scope>NUCLEOTIDE SEQUENCE [LARGE SCALE GENOMIC DNA]</scope>
    <source>
        <strain>ATCC MYA-4620 / CBS 123657 / FGSC 9075 / NRRL 31084 / PH-1</strain>
    </source>
</reference>
<reference key="2">
    <citation type="journal article" date="2010" name="Nature">
        <title>Comparative genomics reveals mobile pathogenicity chromosomes in Fusarium.</title>
        <authorList>
            <person name="Ma L.-J."/>
            <person name="van der Does H.C."/>
            <person name="Borkovich K.A."/>
            <person name="Coleman J.J."/>
            <person name="Daboussi M.-J."/>
            <person name="Di Pietro A."/>
            <person name="Dufresne M."/>
            <person name="Freitag M."/>
            <person name="Grabherr M."/>
            <person name="Henrissat B."/>
            <person name="Houterman P.M."/>
            <person name="Kang S."/>
            <person name="Shim W.-B."/>
            <person name="Woloshuk C."/>
            <person name="Xie X."/>
            <person name="Xu J.-R."/>
            <person name="Antoniw J."/>
            <person name="Baker S.E."/>
            <person name="Bluhm B.H."/>
            <person name="Breakspear A."/>
            <person name="Brown D.W."/>
            <person name="Butchko R.A.E."/>
            <person name="Chapman S."/>
            <person name="Coulson R."/>
            <person name="Coutinho P.M."/>
            <person name="Danchin E.G.J."/>
            <person name="Diener A."/>
            <person name="Gale L.R."/>
            <person name="Gardiner D.M."/>
            <person name="Goff S."/>
            <person name="Hammond-Kosack K.E."/>
            <person name="Hilburn K."/>
            <person name="Hua-Van A."/>
            <person name="Jonkers W."/>
            <person name="Kazan K."/>
            <person name="Kodira C.D."/>
            <person name="Koehrsen M."/>
            <person name="Kumar L."/>
            <person name="Lee Y.-H."/>
            <person name="Li L."/>
            <person name="Manners J.M."/>
            <person name="Miranda-Saavedra D."/>
            <person name="Mukherjee M."/>
            <person name="Park G."/>
            <person name="Park J."/>
            <person name="Park S.-Y."/>
            <person name="Proctor R.H."/>
            <person name="Regev A."/>
            <person name="Ruiz-Roldan M.C."/>
            <person name="Sain D."/>
            <person name="Sakthikumar S."/>
            <person name="Sykes S."/>
            <person name="Schwartz D.C."/>
            <person name="Turgeon B.G."/>
            <person name="Wapinski I."/>
            <person name="Yoder O."/>
            <person name="Young S."/>
            <person name="Zeng Q."/>
            <person name="Zhou S."/>
            <person name="Galagan J."/>
            <person name="Cuomo C.A."/>
            <person name="Kistler H.C."/>
            <person name="Rep M."/>
        </authorList>
    </citation>
    <scope>GENOME REANNOTATION</scope>
    <source>
        <strain>ATCC MYA-4620 / CBS 123657 / FGSC 9075 / NRRL 31084 / PH-1</strain>
    </source>
</reference>
<reference key="3">
    <citation type="journal article" date="2015" name="BMC Genomics">
        <title>The completed genome sequence of the pathogenic ascomycete fungus Fusarium graminearum.</title>
        <authorList>
            <person name="King R."/>
            <person name="Urban M."/>
            <person name="Hammond-Kosack M.C.U."/>
            <person name="Hassani-Pak K."/>
            <person name="Hammond-Kosack K.E."/>
        </authorList>
    </citation>
    <scope>NUCLEOTIDE SEQUENCE [LARGE SCALE GENOMIC DNA]</scope>
    <source>
        <strain>ATCC MYA-4620 / CBS 123657 / FGSC 9075 / NRRL 31084 / PH-1</strain>
    </source>
</reference>
<feature type="chain" id="PRO_0000232169" description="ATP-dependent RNA helicase DBP2">
    <location>
        <begin position="1"/>
        <end position="554"/>
    </location>
</feature>
<feature type="domain" description="Helicase ATP-binding" evidence="2">
    <location>
        <begin position="167"/>
        <end position="342"/>
    </location>
</feature>
<feature type="domain" description="Helicase C-terminal" evidence="3">
    <location>
        <begin position="357"/>
        <end position="517"/>
    </location>
</feature>
<feature type="region of interest" description="Disordered" evidence="4">
    <location>
        <begin position="1"/>
        <end position="47"/>
    </location>
</feature>
<feature type="region of interest" description="RNA-binding RGG-box" evidence="1">
    <location>
        <begin position="519"/>
        <end position="540"/>
    </location>
</feature>
<feature type="short sequence motif" description="Q motif">
    <location>
        <begin position="136"/>
        <end position="164"/>
    </location>
</feature>
<feature type="short sequence motif" description="DEAD box">
    <location>
        <begin position="290"/>
        <end position="293"/>
    </location>
</feature>
<feature type="compositionally biased region" description="Gly residues" evidence="4">
    <location>
        <begin position="1"/>
        <end position="24"/>
    </location>
</feature>
<feature type="compositionally biased region" description="Basic and acidic residues" evidence="4">
    <location>
        <begin position="25"/>
        <end position="35"/>
    </location>
</feature>
<feature type="compositionally biased region" description="Gly residues" evidence="4">
    <location>
        <begin position="36"/>
        <end position="47"/>
    </location>
</feature>
<feature type="binding site" evidence="2">
    <location>
        <begin position="180"/>
        <end position="187"/>
    </location>
    <ligand>
        <name>ATP</name>
        <dbReference type="ChEBI" id="CHEBI:30616"/>
    </ligand>
</feature>
<keyword id="KW-0067">ATP-binding</keyword>
<keyword id="KW-0963">Cytoplasm</keyword>
<keyword id="KW-0347">Helicase</keyword>
<keyword id="KW-0378">Hydrolase</keyword>
<keyword id="KW-0866">Nonsense-mediated mRNA decay</keyword>
<keyword id="KW-0547">Nucleotide-binding</keyword>
<keyword id="KW-0539">Nucleus</keyword>
<keyword id="KW-1185">Reference proteome</keyword>
<keyword id="KW-0690">Ribosome biogenesis</keyword>
<keyword id="KW-0694">RNA-binding</keyword>
<keyword id="KW-0698">rRNA processing</keyword>
<comment type="function">
    <text evidence="1">ATP-dependent RNA helicase involved nonsense-mediated mRNA decay and ribosome biogenesis through rRNA processing.</text>
</comment>
<comment type="catalytic activity">
    <reaction>
        <text>ATP + H2O = ADP + phosphate + H(+)</text>
        <dbReference type="Rhea" id="RHEA:13065"/>
        <dbReference type="ChEBI" id="CHEBI:15377"/>
        <dbReference type="ChEBI" id="CHEBI:15378"/>
        <dbReference type="ChEBI" id="CHEBI:30616"/>
        <dbReference type="ChEBI" id="CHEBI:43474"/>
        <dbReference type="ChEBI" id="CHEBI:456216"/>
        <dbReference type="EC" id="3.6.4.13"/>
    </reaction>
</comment>
<comment type="subunit">
    <text evidence="1">Associates with polysomes.</text>
</comment>
<comment type="subcellular location">
    <subcellularLocation>
        <location evidence="1">Cytoplasm</location>
    </subcellularLocation>
    <subcellularLocation>
        <location evidence="1">Nucleus</location>
    </subcellularLocation>
</comment>
<comment type="domain">
    <text>The Q motif is unique to and characteristic of the DEAD box family of RNA helicases and controls ATP binding and hydrolysis.</text>
</comment>
<comment type="similarity">
    <text evidence="5">Belongs to the DEAD box helicase family. DDX5/DBP2 subfamily.</text>
</comment>
<comment type="sequence caution" evidence="5">
    <conflict type="erroneous gene model prediction">
        <sequence resource="EMBL-CDS" id="ESU09004"/>
    </conflict>
</comment>
<organism>
    <name type="scientific">Gibberella zeae (strain ATCC MYA-4620 / CBS 123657 / FGSC 9075 / NRRL 31084 / PH-1)</name>
    <name type="common">Wheat head blight fungus</name>
    <name type="synonym">Fusarium graminearum</name>
    <dbReference type="NCBI Taxonomy" id="229533"/>
    <lineage>
        <taxon>Eukaryota</taxon>
        <taxon>Fungi</taxon>
        <taxon>Dikarya</taxon>
        <taxon>Ascomycota</taxon>
        <taxon>Pezizomycotina</taxon>
        <taxon>Sordariomycetes</taxon>
        <taxon>Hypocreomycetidae</taxon>
        <taxon>Hypocreales</taxon>
        <taxon>Nectriaceae</taxon>
        <taxon>Fusarium</taxon>
    </lineage>
</organism>
<dbReference type="EC" id="3.6.4.13"/>
<dbReference type="EMBL" id="DS231664">
    <property type="protein sequence ID" value="ESU09004.1"/>
    <property type="status" value="ALT_SEQ"/>
    <property type="molecule type" value="Genomic_DNA"/>
</dbReference>
<dbReference type="EMBL" id="HG970333">
    <property type="protein sequence ID" value="CEF79084.1"/>
    <property type="molecule type" value="Genomic_DNA"/>
</dbReference>
<dbReference type="RefSeq" id="XP_011321503.1">
    <property type="nucleotide sequence ID" value="XM_011323201.1"/>
</dbReference>
<dbReference type="SMR" id="Q4IF76"/>
<dbReference type="FunCoup" id="Q4IF76">
    <property type="interactions" value="1186"/>
</dbReference>
<dbReference type="STRING" id="229533.Q4IF76"/>
<dbReference type="GeneID" id="23559117"/>
<dbReference type="KEGG" id="fgr:FGSG_12302"/>
<dbReference type="VEuPathDB" id="FungiDB:FGRAMPH1_01G14563"/>
<dbReference type="eggNOG" id="KOG0331">
    <property type="taxonomic scope" value="Eukaryota"/>
</dbReference>
<dbReference type="HOGENOM" id="CLU_003041_16_9_1"/>
<dbReference type="InParanoid" id="Q4IF76"/>
<dbReference type="OrthoDB" id="84023at110618"/>
<dbReference type="Proteomes" id="UP000070720">
    <property type="component" value="Chromosome 2"/>
</dbReference>
<dbReference type="GO" id="GO:0005737">
    <property type="term" value="C:cytoplasm"/>
    <property type="evidence" value="ECO:0007669"/>
    <property type="project" value="UniProtKB-SubCell"/>
</dbReference>
<dbReference type="GO" id="GO:0005634">
    <property type="term" value="C:nucleus"/>
    <property type="evidence" value="ECO:0007669"/>
    <property type="project" value="UniProtKB-SubCell"/>
</dbReference>
<dbReference type="GO" id="GO:0005524">
    <property type="term" value="F:ATP binding"/>
    <property type="evidence" value="ECO:0007669"/>
    <property type="project" value="UniProtKB-KW"/>
</dbReference>
<dbReference type="GO" id="GO:0016887">
    <property type="term" value="F:ATP hydrolysis activity"/>
    <property type="evidence" value="ECO:0007669"/>
    <property type="project" value="RHEA"/>
</dbReference>
<dbReference type="GO" id="GO:0003723">
    <property type="term" value="F:RNA binding"/>
    <property type="evidence" value="ECO:0007669"/>
    <property type="project" value="UniProtKB-KW"/>
</dbReference>
<dbReference type="GO" id="GO:0003724">
    <property type="term" value="F:RNA helicase activity"/>
    <property type="evidence" value="ECO:0007669"/>
    <property type="project" value="UniProtKB-EC"/>
</dbReference>
<dbReference type="GO" id="GO:0000184">
    <property type="term" value="P:nuclear-transcribed mRNA catabolic process, nonsense-mediated decay"/>
    <property type="evidence" value="ECO:0007669"/>
    <property type="project" value="UniProtKB-KW"/>
</dbReference>
<dbReference type="GO" id="GO:0006364">
    <property type="term" value="P:rRNA processing"/>
    <property type="evidence" value="ECO:0007669"/>
    <property type="project" value="UniProtKB-KW"/>
</dbReference>
<dbReference type="CDD" id="cd17966">
    <property type="entry name" value="DEADc_DDX5_DDX17"/>
    <property type="match status" value="1"/>
</dbReference>
<dbReference type="CDD" id="cd18787">
    <property type="entry name" value="SF2_C_DEAD"/>
    <property type="match status" value="1"/>
</dbReference>
<dbReference type="FunFam" id="3.40.50.300:FF:000008">
    <property type="entry name" value="ATP-dependent RNA helicase RhlB"/>
    <property type="match status" value="1"/>
</dbReference>
<dbReference type="FunFam" id="3.40.50.300:FF:000079">
    <property type="entry name" value="probable ATP-dependent RNA helicase DDX17"/>
    <property type="match status" value="1"/>
</dbReference>
<dbReference type="Gene3D" id="3.40.50.300">
    <property type="entry name" value="P-loop containing nucleotide triphosphate hydrolases"/>
    <property type="match status" value="2"/>
</dbReference>
<dbReference type="InterPro" id="IPR011545">
    <property type="entry name" value="DEAD/DEAH_box_helicase_dom"/>
</dbReference>
<dbReference type="InterPro" id="IPR014001">
    <property type="entry name" value="Helicase_ATP-bd"/>
</dbReference>
<dbReference type="InterPro" id="IPR001650">
    <property type="entry name" value="Helicase_C-like"/>
</dbReference>
<dbReference type="InterPro" id="IPR027417">
    <property type="entry name" value="P-loop_NTPase"/>
</dbReference>
<dbReference type="InterPro" id="IPR000629">
    <property type="entry name" value="RNA-helicase_DEAD-box_CS"/>
</dbReference>
<dbReference type="InterPro" id="IPR014014">
    <property type="entry name" value="RNA_helicase_DEAD_Q_motif"/>
</dbReference>
<dbReference type="PANTHER" id="PTHR47958">
    <property type="entry name" value="ATP-DEPENDENT RNA HELICASE DBP3"/>
    <property type="match status" value="1"/>
</dbReference>
<dbReference type="Pfam" id="PF00270">
    <property type="entry name" value="DEAD"/>
    <property type="match status" value="1"/>
</dbReference>
<dbReference type="Pfam" id="PF00271">
    <property type="entry name" value="Helicase_C"/>
    <property type="match status" value="1"/>
</dbReference>
<dbReference type="SMART" id="SM00487">
    <property type="entry name" value="DEXDc"/>
    <property type="match status" value="1"/>
</dbReference>
<dbReference type="SMART" id="SM00490">
    <property type="entry name" value="HELICc"/>
    <property type="match status" value="1"/>
</dbReference>
<dbReference type="SUPFAM" id="SSF52540">
    <property type="entry name" value="P-loop containing nucleoside triphosphate hydrolases"/>
    <property type="match status" value="1"/>
</dbReference>
<dbReference type="PROSITE" id="PS00039">
    <property type="entry name" value="DEAD_ATP_HELICASE"/>
    <property type="match status" value="1"/>
</dbReference>
<dbReference type="PROSITE" id="PS51192">
    <property type="entry name" value="HELICASE_ATP_BIND_1"/>
    <property type="match status" value="1"/>
</dbReference>
<dbReference type="PROSITE" id="PS51194">
    <property type="entry name" value="HELICASE_CTER"/>
    <property type="match status" value="1"/>
</dbReference>
<dbReference type="PROSITE" id="PS51195">
    <property type="entry name" value="Q_MOTIF"/>
    <property type="match status" value="1"/>
</dbReference>
<proteinExistence type="inferred from homology"/>
<name>DBP2_GIBZE</name>